<comment type="function">
    <text evidence="1">Binds directly to 23S rRNA. The L1 stalk is quite mobile in the ribosome, and is involved in E site tRNA release.</text>
</comment>
<comment type="function">
    <text evidence="1">Protein L1 is also a translational repressor protein, it controls the translation of the L11 operon by binding to its mRNA.</text>
</comment>
<comment type="subunit">
    <text evidence="1">Part of the 50S ribosomal subunit.</text>
</comment>
<comment type="similarity">
    <text evidence="1">Belongs to the universal ribosomal protein uL1 family.</text>
</comment>
<organism>
    <name type="scientific">Salinispora arenicola (strain CNS-205)</name>
    <dbReference type="NCBI Taxonomy" id="391037"/>
    <lineage>
        <taxon>Bacteria</taxon>
        <taxon>Bacillati</taxon>
        <taxon>Actinomycetota</taxon>
        <taxon>Actinomycetes</taxon>
        <taxon>Micromonosporales</taxon>
        <taxon>Micromonosporaceae</taxon>
        <taxon>Salinispora</taxon>
    </lineage>
</organism>
<evidence type="ECO:0000255" key="1">
    <source>
        <dbReference type="HAMAP-Rule" id="MF_01318"/>
    </source>
</evidence>
<evidence type="ECO:0000305" key="2"/>
<accession>A8M542</accession>
<name>RL1_SALAI</name>
<protein>
    <recommendedName>
        <fullName evidence="1">Large ribosomal subunit protein uL1</fullName>
    </recommendedName>
    <alternativeName>
        <fullName evidence="2">50S ribosomal protein L1</fullName>
    </alternativeName>
</protein>
<sequence>MQHSKSYRKAAAAIDRSKLYTPAEAVKLAKETTSVKFDATVEVAMRLGVDPRKADQMVRGTVNLPHGTGKTARVIVFAAGAKAEEAVAAGADEVGTDELVARIQGGWLEFDAAIATPDQMAKIGRIARILGPRGLMPNPKTGTVTMNVAKAVSDIKGGKIAFRVDKHSNLHLIIGKASFSEAQLVDNYAAVLDEVLRAKPSAAKGKYLKKVTLTTTMGPGVPVDPNVVKNLQEGSAEG</sequence>
<feature type="chain" id="PRO_1000086301" description="Large ribosomal subunit protein uL1">
    <location>
        <begin position="1"/>
        <end position="238"/>
    </location>
</feature>
<gene>
    <name evidence="1" type="primary">rplA</name>
    <name type="ordered locus">Sare_4328</name>
</gene>
<proteinExistence type="inferred from homology"/>
<reference key="1">
    <citation type="submission" date="2007-10" db="EMBL/GenBank/DDBJ databases">
        <title>Complete sequence of Salinispora arenicola CNS-205.</title>
        <authorList>
            <consortium name="US DOE Joint Genome Institute"/>
            <person name="Copeland A."/>
            <person name="Lucas S."/>
            <person name="Lapidus A."/>
            <person name="Barry K."/>
            <person name="Glavina del Rio T."/>
            <person name="Dalin E."/>
            <person name="Tice H."/>
            <person name="Pitluck S."/>
            <person name="Foster B."/>
            <person name="Schmutz J."/>
            <person name="Larimer F."/>
            <person name="Land M."/>
            <person name="Hauser L."/>
            <person name="Kyrpides N."/>
            <person name="Ivanova N."/>
            <person name="Jensen P.R."/>
            <person name="Moore B.S."/>
            <person name="Penn K."/>
            <person name="Jenkins C."/>
            <person name="Udwary D."/>
            <person name="Xiang L."/>
            <person name="Gontang E."/>
            <person name="Richardson P."/>
        </authorList>
    </citation>
    <scope>NUCLEOTIDE SEQUENCE [LARGE SCALE GENOMIC DNA]</scope>
    <source>
        <strain>CNS-205</strain>
    </source>
</reference>
<keyword id="KW-0678">Repressor</keyword>
<keyword id="KW-0687">Ribonucleoprotein</keyword>
<keyword id="KW-0689">Ribosomal protein</keyword>
<keyword id="KW-0694">RNA-binding</keyword>
<keyword id="KW-0699">rRNA-binding</keyword>
<keyword id="KW-0810">Translation regulation</keyword>
<keyword id="KW-0820">tRNA-binding</keyword>
<dbReference type="EMBL" id="CP000850">
    <property type="protein sequence ID" value="ABW00110.1"/>
    <property type="molecule type" value="Genomic_DNA"/>
</dbReference>
<dbReference type="SMR" id="A8M542"/>
<dbReference type="STRING" id="391037.Sare_4328"/>
<dbReference type="KEGG" id="saq:Sare_4328"/>
<dbReference type="PATRIC" id="fig|391037.6.peg.4369"/>
<dbReference type="eggNOG" id="COG0081">
    <property type="taxonomic scope" value="Bacteria"/>
</dbReference>
<dbReference type="HOGENOM" id="CLU_062853_0_0_11"/>
<dbReference type="OrthoDB" id="9803740at2"/>
<dbReference type="GO" id="GO:0015934">
    <property type="term" value="C:large ribosomal subunit"/>
    <property type="evidence" value="ECO:0007669"/>
    <property type="project" value="InterPro"/>
</dbReference>
<dbReference type="GO" id="GO:0019843">
    <property type="term" value="F:rRNA binding"/>
    <property type="evidence" value="ECO:0007669"/>
    <property type="project" value="UniProtKB-UniRule"/>
</dbReference>
<dbReference type="GO" id="GO:0003735">
    <property type="term" value="F:structural constituent of ribosome"/>
    <property type="evidence" value="ECO:0007669"/>
    <property type="project" value="InterPro"/>
</dbReference>
<dbReference type="GO" id="GO:0000049">
    <property type="term" value="F:tRNA binding"/>
    <property type="evidence" value="ECO:0007669"/>
    <property type="project" value="UniProtKB-KW"/>
</dbReference>
<dbReference type="GO" id="GO:0006417">
    <property type="term" value="P:regulation of translation"/>
    <property type="evidence" value="ECO:0007669"/>
    <property type="project" value="UniProtKB-KW"/>
</dbReference>
<dbReference type="GO" id="GO:0006412">
    <property type="term" value="P:translation"/>
    <property type="evidence" value="ECO:0007669"/>
    <property type="project" value="UniProtKB-UniRule"/>
</dbReference>
<dbReference type="CDD" id="cd00403">
    <property type="entry name" value="Ribosomal_L1"/>
    <property type="match status" value="1"/>
</dbReference>
<dbReference type="FunFam" id="3.40.50.790:FF:000001">
    <property type="entry name" value="50S ribosomal protein L1"/>
    <property type="match status" value="1"/>
</dbReference>
<dbReference type="Gene3D" id="3.30.190.20">
    <property type="match status" value="1"/>
</dbReference>
<dbReference type="Gene3D" id="3.40.50.790">
    <property type="match status" value="1"/>
</dbReference>
<dbReference type="HAMAP" id="MF_01318_B">
    <property type="entry name" value="Ribosomal_uL1_B"/>
    <property type="match status" value="1"/>
</dbReference>
<dbReference type="InterPro" id="IPR005878">
    <property type="entry name" value="Ribosom_uL1_bac-type"/>
</dbReference>
<dbReference type="InterPro" id="IPR002143">
    <property type="entry name" value="Ribosomal_uL1"/>
</dbReference>
<dbReference type="InterPro" id="IPR023674">
    <property type="entry name" value="Ribosomal_uL1-like"/>
</dbReference>
<dbReference type="InterPro" id="IPR028364">
    <property type="entry name" value="Ribosomal_uL1/biogenesis"/>
</dbReference>
<dbReference type="InterPro" id="IPR016095">
    <property type="entry name" value="Ribosomal_uL1_3-a/b-sand"/>
</dbReference>
<dbReference type="InterPro" id="IPR023673">
    <property type="entry name" value="Ribosomal_uL1_CS"/>
</dbReference>
<dbReference type="NCBIfam" id="TIGR01169">
    <property type="entry name" value="rplA_bact"/>
    <property type="match status" value="1"/>
</dbReference>
<dbReference type="PANTHER" id="PTHR36427">
    <property type="entry name" value="54S RIBOSOMAL PROTEIN L1, MITOCHONDRIAL"/>
    <property type="match status" value="1"/>
</dbReference>
<dbReference type="PANTHER" id="PTHR36427:SF3">
    <property type="entry name" value="LARGE RIBOSOMAL SUBUNIT PROTEIN UL1M"/>
    <property type="match status" value="1"/>
</dbReference>
<dbReference type="Pfam" id="PF00687">
    <property type="entry name" value="Ribosomal_L1"/>
    <property type="match status" value="1"/>
</dbReference>
<dbReference type="PIRSF" id="PIRSF002155">
    <property type="entry name" value="Ribosomal_L1"/>
    <property type="match status" value="1"/>
</dbReference>
<dbReference type="SUPFAM" id="SSF56808">
    <property type="entry name" value="Ribosomal protein L1"/>
    <property type="match status" value="1"/>
</dbReference>
<dbReference type="PROSITE" id="PS01199">
    <property type="entry name" value="RIBOSOMAL_L1"/>
    <property type="match status" value="1"/>
</dbReference>